<dbReference type="EMBL" id="CP000851">
    <property type="protein sequence ID" value="ABV86434.1"/>
    <property type="molecule type" value="Genomic_DNA"/>
</dbReference>
<dbReference type="RefSeq" id="WP_012154363.1">
    <property type="nucleotide sequence ID" value="NC_009901.1"/>
</dbReference>
<dbReference type="SMR" id="A8H1J7"/>
<dbReference type="STRING" id="398579.Spea_1107"/>
<dbReference type="KEGG" id="spl:Spea_1107"/>
<dbReference type="eggNOG" id="COG2924">
    <property type="taxonomic scope" value="Bacteria"/>
</dbReference>
<dbReference type="HOGENOM" id="CLU_170994_0_0_6"/>
<dbReference type="OrthoDB" id="9804318at2"/>
<dbReference type="Proteomes" id="UP000002608">
    <property type="component" value="Chromosome"/>
</dbReference>
<dbReference type="GO" id="GO:0005829">
    <property type="term" value="C:cytosol"/>
    <property type="evidence" value="ECO:0007669"/>
    <property type="project" value="TreeGrafter"/>
</dbReference>
<dbReference type="GO" id="GO:0005506">
    <property type="term" value="F:iron ion binding"/>
    <property type="evidence" value="ECO:0007669"/>
    <property type="project" value="UniProtKB-UniRule"/>
</dbReference>
<dbReference type="GO" id="GO:0034599">
    <property type="term" value="P:cellular response to oxidative stress"/>
    <property type="evidence" value="ECO:0007669"/>
    <property type="project" value="TreeGrafter"/>
</dbReference>
<dbReference type="FunFam" id="1.10.3880.10:FF:000001">
    <property type="entry name" value="Probable Fe(2+)-trafficking protein"/>
    <property type="match status" value="1"/>
</dbReference>
<dbReference type="Gene3D" id="1.10.3880.10">
    <property type="entry name" value="Fe(II) trafficking protein YggX"/>
    <property type="match status" value="1"/>
</dbReference>
<dbReference type="HAMAP" id="MF_00686">
    <property type="entry name" value="Fe_traffic_YggX"/>
    <property type="match status" value="1"/>
</dbReference>
<dbReference type="InterPro" id="IPR007457">
    <property type="entry name" value="Fe_traffick_prot_YggX"/>
</dbReference>
<dbReference type="InterPro" id="IPR036766">
    <property type="entry name" value="Fe_traffick_prot_YggX_sf"/>
</dbReference>
<dbReference type="NCBIfam" id="NF003817">
    <property type="entry name" value="PRK05408.1"/>
    <property type="match status" value="1"/>
</dbReference>
<dbReference type="PANTHER" id="PTHR36965">
    <property type="entry name" value="FE(2+)-TRAFFICKING PROTEIN-RELATED"/>
    <property type="match status" value="1"/>
</dbReference>
<dbReference type="PANTHER" id="PTHR36965:SF1">
    <property type="entry name" value="FE(2+)-TRAFFICKING PROTEIN-RELATED"/>
    <property type="match status" value="1"/>
</dbReference>
<dbReference type="Pfam" id="PF04362">
    <property type="entry name" value="Iron_traffic"/>
    <property type="match status" value="1"/>
</dbReference>
<dbReference type="PIRSF" id="PIRSF029827">
    <property type="entry name" value="Fe_traffic_YggX"/>
    <property type="match status" value="1"/>
</dbReference>
<dbReference type="SUPFAM" id="SSF111148">
    <property type="entry name" value="YggX-like"/>
    <property type="match status" value="1"/>
</dbReference>
<feature type="chain" id="PRO_1000083086" description="Probable Fe(2+)-trafficking protein">
    <location>
        <begin position="1"/>
        <end position="92"/>
    </location>
</feature>
<accession>A8H1J7</accession>
<proteinExistence type="inferred from homology"/>
<reference key="1">
    <citation type="submission" date="2007-10" db="EMBL/GenBank/DDBJ databases">
        <title>Complete sequence of Shewanella pealeana ATCC 700345.</title>
        <authorList>
            <consortium name="US DOE Joint Genome Institute"/>
            <person name="Copeland A."/>
            <person name="Lucas S."/>
            <person name="Lapidus A."/>
            <person name="Barry K."/>
            <person name="Glavina del Rio T."/>
            <person name="Dalin E."/>
            <person name="Tice H."/>
            <person name="Pitluck S."/>
            <person name="Chertkov O."/>
            <person name="Brettin T."/>
            <person name="Bruce D."/>
            <person name="Detter J.C."/>
            <person name="Han C."/>
            <person name="Schmutz J."/>
            <person name="Larimer F."/>
            <person name="Land M."/>
            <person name="Hauser L."/>
            <person name="Kyrpides N."/>
            <person name="Kim E."/>
            <person name="Zhao J.-S.Z."/>
            <person name="Manno D."/>
            <person name="Hawari J."/>
            <person name="Richardson P."/>
        </authorList>
    </citation>
    <scope>NUCLEOTIDE SEQUENCE [LARGE SCALE GENOMIC DNA]</scope>
    <source>
        <strain>ATCC 700345 / ANG-SQ1</strain>
    </source>
</reference>
<comment type="function">
    <text evidence="1">Could be a mediator in iron transactions between iron acquisition and iron-requiring processes, such as synthesis and/or repair of Fe-S clusters in biosynthetic enzymes.</text>
</comment>
<comment type="similarity">
    <text evidence="1">Belongs to the Fe(2+)-trafficking protein family.</text>
</comment>
<gene>
    <name type="ordered locus">Spea_1107</name>
</gene>
<evidence type="ECO:0000255" key="1">
    <source>
        <dbReference type="HAMAP-Rule" id="MF_00686"/>
    </source>
</evidence>
<name>FETP_SHEPA</name>
<keyword id="KW-0408">Iron</keyword>
<keyword id="KW-1185">Reference proteome</keyword>
<sequence>MARTVNCVYLNKEAEGLGFQLYPGDLGKRIFDNVSKEAWALWQSKQTMLINEKKLNMMNVEDRKFLEEQMVNFLFEGKDVEIEGYVPQKDDE</sequence>
<organism>
    <name type="scientific">Shewanella pealeana (strain ATCC 700345 / ANG-SQ1)</name>
    <dbReference type="NCBI Taxonomy" id="398579"/>
    <lineage>
        <taxon>Bacteria</taxon>
        <taxon>Pseudomonadati</taxon>
        <taxon>Pseudomonadota</taxon>
        <taxon>Gammaproteobacteria</taxon>
        <taxon>Alteromonadales</taxon>
        <taxon>Shewanellaceae</taxon>
        <taxon>Shewanella</taxon>
    </lineage>
</organism>
<protein>
    <recommendedName>
        <fullName evidence="1">Probable Fe(2+)-trafficking protein</fullName>
    </recommendedName>
</protein>